<dbReference type="EC" id="2.7.7.-" evidence="1"/>
<dbReference type="EMBL" id="FJ616285">
    <property type="protein sequence ID" value="ACM48048.1"/>
    <property type="molecule type" value="Genomic_DNA"/>
</dbReference>
<dbReference type="Proteomes" id="UP000006907">
    <property type="component" value="Segment"/>
</dbReference>
<dbReference type="GO" id="GO:0042025">
    <property type="term" value="C:host cell nucleus"/>
    <property type="evidence" value="ECO:0007669"/>
    <property type="project" value="UniProtKB-SubCell"/>
</dbReference>
<dbReference type="GO" id="GO:0003899">
    <property type="term" value="F:DNA-directed RNA polymerase activity"/>
    <property type="evidence" value="ECO:0007669"/>
    <property type="project" value="InterPro"/>
</dbReference>
<dbReference type="GO" id="GO:0008270">
    <property type="term" value="F:zinc ion binding"/>
    <property type="evidence" value="ECO:0007669"/>
    <property type="project" value="UniProtKB-KW"/>
</dbReference>
<dbReference type="GO" id="GO:0039686">
    <property type="term" value="P:bidirectional double-stranded viral DNA replication"/>
    <property type="evidence" value="ECO:0007669"/>
    <property type="project" value="InterPro"/>
</dbReference>
<dbReference type="GO" id="GO:0006260">
    <property type="term" value="P:DNA replication"/>
    <property type="evidence" value="ECO:0007669"/>
    <property type="project" value="UniProtKB-KW"/>
</dbReference>
<dbReference type="HAMAP" id="MF_04011">
    <property type="entry name" value="HSV_PRIM"/>
    <property type="match status" value="1"/>
</dbReference>
<dbReference type="InterPro" id="IPR033685">
    <property type="entry name" value="HSV_PRIM"/>
</dbReference>
<dbReference type="Pfam" id="PF03121">
    <property type="entry name" value="Herpes_UL52"/>
    <property type="match status" value="1"/>
</dbReference>
<name>PRIM_HCMVT</name>
<protein>
    <recommendedName>
        <fullName evidence="1">DNA primase</fullName>
        <ecNumber evidence="1">2.7.7.-</ecNumber>
    </recommendedName>
</protein>
<evidence type="ECO:0000255" key="1">
    <source>
        <dbReference type="HAMAP-Rule" id="MF_04011"/>
    </source>
</evidence>
<evidence type="ECO:0000256" key="2">
    <source>
        <dbReference type="SAM" id="MobiDB-lite"/>
    </source>
</evidence>
<evidence type="ECO:0000269" key="3">
    <source>
    </source>
</evidence>
<organismHost>
    <name type="scientific">Homo sapiens</name>
    <name type="common">Human</name>
    <dbReference type="NCBI Taxonomy" id="9606"/>
</organismHost>
<gene>
    <name type="primary">UL70</name>
</gene>
<sequence length="946" mass="107857">MTLVLFATEYDSAHIVANVLSQTPTDHCVFPLLVKHQVSRRVYFCLQTQKCSDSRRVAPVFAVNNETLQLSRYLAARQPIPLSALIASLDEAETQPLYRHLFRTPVLSPEHGGEVREFKHLVYFHHAAVLRHLNQVFLCPTSPSWFISVFGHTEGQVLLTMAYYLFEGQYSTISTVEEYVRSFCTRDLGTIIPTHASMGEFARLLLGSPFRQRVSAFVAYAVARNRRDYTELEQVDTQINAFRERARLPDTVCVHYVYLAYRTALARARLLEYRRVVAYDADAAPEAQCTREPGFLGRRLSTELLDVMQKYFSLDNFLHDYVETHLLRLDESPHSATSPHGLGLAGYGGRIDGTHLAGFFGTSTQLARQLERINTLSESVFSPLERSLSGLLRLCASLRTAQTYTTGTLTRYSQRRYLLPEPALAPLLERPLPVYRVHLPNDQHVFCAVASETWHRSLFPRDLLRHVPDSRFSDEALTETVWLHDDDVASTSPETQFYYTRHEVFNERLPVFNFVADFDLRLRDGVSGLARHTVFELCRGLRRVWMTVWASLFGYTHPDRHPVYFFKSACPPNSVPVDAAGAPFDDDDYLDYRDERDTEEDEDGKENKNNVPDNGVFQKTTSSVDTSPPYCRCKGKLGLRIITPFPACTVAVHPSVLRAVAQVLNHAVCLDAELHTLLDPISHPESSLDTGIYHHGRSVRLPYMYKMDQDDGYFMHRRLLPLFIVPDAYREHPLGFVRAQLDLRNLLHHHPPHDLPALPLSPPPRVILSVRDKICPSTEANFIETRSLNVTRYRRRGLTEVLAYHLYGGDGATAAAISDTDLQRLVVTRVWPPLLEHLTQHYEPHVSEQFTAPHVLLFQPHGACCVAVKRRDGARTRDFRCLNYTHRNPQETVQVFIDLRTEHSYALWASLWSRCFTKKCHSNAKNVHISIKIRPPDAPMPPATAV</sequence>
<feature type="chain" id="PRO_0000416449" description="DNA primase">
    <location>
        <begin position="1"/>
        <end position="946"/>
    </location>
</feature>
<feature type="zinc finger region" description="CHC2-type" evidence="1">
    <location>
        <begin position="881"/>
        <end position="920"/>
    </location>
</feature>
<feature type="region of interest" description="Disordered" evidence="2">
    <location>
        <begin position="596"/>
        <end position="626"/>
    </location>
</feature>
<feature type="compositionally biased region" description="Polar residues" evidence="2">
    <location>
        <begin position="617"/>
        <end position="626"/>
    </location>
</feature>
<feature type="site" description="Essential for primase activity" evidence="1">
    <location>
        <position position="517"/>
    </location>
</feature>
<feature type="site" description="Essential for primase activity" evidence="1">
    <location>
        <position position="519"/>
    </location>
</feature>
<proteinExistence type="evidence at protein level"/>
<keyword id="KW-0235">DNA replication</keyword>
<keyword id="KW-1048">Host nucleus</keyword>
<keyword id="KW-0945">Host-virus interaction</keyword>
<keyword id="KW-0479">Metal-binding</keyword>
<keyword id="KW-0808">Transferase</keyword>
<keyword id="KW-0862">Zinc</keyword>
<keyword id="KW-0863">Zinc-finger</keyword>
<reference key="1">
    <citation type="journal article" date="2009" name="J. Gen. Virol.">
        <title>High-throughput sequence analysis of variants of human cytomegalovirus strains Towne and AD169.</title>
        <authorList>
            <person name="Bradley A.J."/>
            <person name="Lurain N.S."/>
            <person name="Ghazal P."/>
            <person name="Trivedi U."/>
            <person name="Cunningham C."/>
            <person name="Baluchova K."/>
            <person name="Gatherer D."/>
            <person name="Wilkinson G.W."/>
            <person name="Dargan D.J."/>
            <person name="Davison A.J."/>
        </authorList>
    </citation>
    <scope>NUCLEOTIDE SEQUENCE [LARGE SCALE GENOMIC DNA]</scope>
</reference>
<reference key="2">
    <citation type="journal article" date="2004" name="J. Gen. Virol.">
        <title>Genetic content of wild-type human cytomegalovirus.</title>
        <authorList>
            <person name="Dolan A."/>
            <person name="Cunningham C."/>
            <person name="Hector R.D."/>
            <person name="Hassan-Walker A.F."/>
            <person name="Lee L."/>
            <person name="Addison C."/>
            <person name="Dargan D.J."/>
            <person name="McGeoch D.J."/>
            <person name="Gatherer D."/>
            <person name="Emery V.C."/>
            <person name="Griffiths P.D."/>
            <person name="Sinzger C."/>
            <person name="McSharry B.P."/>
            <person name="Wilkinson G.W.G."/>
            <person name="Davison A.J."/>
        </authorList>
    </citation>
    <scope>NUCLEOTIDE SEQUENCE [LARGE SCALE GENOMIC DNA]</scope>
</reference>
<reference key="3">
    <citation type="journal article" date="2011" name="J. Virol.">
        <title>Human cytomegalovirus primase UL70 specifically interacts with cellular factor Snapin.</title>
        <authorList>
            <person name="Shen A."/>
            <person name="Lei J."/>
            <person name="Yang E."/>
            <person name="Pei Y."/>
            <person name="Chen Y.C."/>
            <person name="Gong H."/>
            <person name="Xiao G."/>
            <person name="Liu F."/>
        </authorList>
    </citation>
    <scope>INTERACTION WITH HOST SNAPIN</scope>
</reference>
<accession>B9VXM8</accession>
<organism>
    <name type="scientific">Human cytomegalovirus (strain Towne)</name>
    <name type="common">HHV-5</name>
    <name type="synonym">Human herpesvirus 5</name>
    <dbReference type="NCBI Taxonomy" id="10363"/>
    <lineage>
        <taxon>Viruses</taxon>
        <taxon>Duplodnaviria</taxon>
        <taxon>Heunggongvirae</taxon>
        <taxon>Peploviricota</taxon>
        <taxon>Herviviricetes</taxon>
        <taxon>Herpesvirales</taxon>
        <taxon>Orthoherpesviridae</taxon>
        <taxon>Betaherpesvirinae</taxon>
        <taxon>Cytomegalovirus</taxon>
        <taxon>Cytomegalovirus humanbeta5</taxon>
        <taxon>Human cytomegalovirus</taxon>
    </lineage>
</organism>
<comment type="function">
    <text evidence="1">Essential component of the helicase/primase complex. Unwinds the DNA at the replication forks and generates single-stranded DNA for both leading and lagging strand synthesis. The primase initiates primer synthesis and thereby produces large amount of short RNA primers on the lagging strand that the polymerase elongates using dNTPs.</text>
</comment>
<comment type="subunit">
    <text evidence="1 3">Associates with the helicase and the primase-associated factor to form the helicase-primase factor (By similarity). Interacts with host SNAPIN.</text>
</comment>
<comment type="subcellular location">
    <subcellularLocation>
        <location evidence="1">Host nucleus</location>
    </subcellularLocation>
    <text evidence="1">Requires the presence of the primase associated factor to properly localize in the host cell nucleus.</text>
</comment>
<comment type="similarity">
    <text evidence="1">Belongs to the herpesviridae DNA primase family.</text>
</comment>